<proteinExistence type="evidence at protein level"/>
<feature type="chain" id="PRO_0000245626" description="UPF0371 protein spr0309">
    <location>
        <begin position="1"/>
        <end position="494"/>
    </location>
</feature>
<feature type="helix" evidence="2">
    <location>
        <begin position="8"/>
        <end position="25"/>
    </location>
</feature>
<feature type="turn" evidence="2">
    <location>
        <begin position="26"/>
        <end position="28"/>
    </location>
</feature>
<feature type="strand" evidence="2">
    <location>
        <begin position="30"/>
        <end position="34"/>
    </location>
</feature>
<feature type="helix" evidence="2">
    <location>
        <begin position="42"/>
        <end position="47"/>
    </location>
</feature>
<feature type="helix" evidence="2">
    <location>
        <begin position="55"/>
        <end position="62"/>
    </location>
</feature>
<feature type="turn" evidence="2">
    <location>
        <begin position="63"/>
        <end position="66"/>
    </location>
</feature>
<feature type="strand" evidence="2">
    <location>
        <begin position="67"/>
        <end position="74"/>
    </location>
</feature>
<feature type="helix" evidence="2">
    <location>
        <begin position="75"/>
        <end position="77"/>
    </location>
</feature>
<feature type="helix" evidence="2">
    <location>
        <begin position="91"/>
        <end position="104"/>
    </location>
</feature>
<feature type="strand" evidence="2">
    <location>
        <begin position="109"/>
        <end position="115"/>
    </location>
</feature>
<feature type="helix" evidence="2">
    <location>
        <begin position="121"/>
        <end position="132"/>
    </location>
</feature>
<feature type="strand" evidence="2">
    <location>
        <begin position="137"/>
        <end position="139"/>
    </location>
</feature>
<feature type="turn" evidence="2">
    <location>
        <begin position="144"/>
        <end position="148"/>
    </location>
</feature>
<feature type="helix" evidence="2">
    <location>
        <begin position="150"/>
        <end position="153"/>
    </location>
</feature>
<feature type="turn" evidence="2">
    <location>
        <begin position="156"/>
        <end position="158"/>
    </location>
</feature>
<feature type="helix" evidence="2">
    <location>
        <begin position="159"/>
        <end position="161"/>
    </location>
</feature>
<feature type="strand" evidence="2">
    <location>
        <begin position="169"/>
        <end position="175"/>
    </location>
</feature>
<feature type="helix" evidence="2">
    <location>
        <begin position="183"/>
        <end position="196"/>
    </location>
</feature>
<feature type="strand" evidence="2">
    <location>
        <begin position="202"/>
        <end position="206"/>
    </location>
</feature>
<feature type="helix" evidence="2">
    <location>
        <begin position="219"/>
        <end position="227"/>
    </location>
</feature>
<feature type="turn" evidence="2">
    <location>
        <begin position="228"/>
        <end position="230"/>
    </location>
</feature>
<feature type="strand" evidence="2">
    <location>
        <begin position="235"/>
        <end position="237"/>
    </location>
</feature>
<feature type="helix" evidence="2">
    <location>
        <begin position="239"/>
        <end position="245"/>
    </location>
</feature>
<feature type="strand" evidence="2">
    <location>
        <begin position="250"/>
        <end position="252"/>
    </location>
</feature>
<feature type="helix" evidence="2">
    <location>
        <begin position="253"/>
        <end position="270"/>
    </location>
</feature>
<feature type="helix" evidence="2">
    <location>
        <begin position="278"/>
        <end position="281"/>
    </location>
</feature>
<feature type="helix" evidence="2">
    <location>
        <begin position="286"/>
        <end position="289"/>
    </location>
</feature>
<feature type="helix" evidence="2">
    <location>
        <begin position="293"/>
        <end position="316"/>
    </location>
</feature>
<feature type="helix" evidence="2">
    <location>
        <begin position="322"/>
        <end position="335"/>
    </location>
</feature>
<feature type="helix" evidence="2">
    <location>
        <begin position="339"/>
        <end position="341"/>
    </location>
</feature>
<feature type="helix" evidence="2">
    <location>
        <begin position="343"/>
        <end position="355"/>
    </location>
</feature>
<feature type="strand" evidence="2">
    <location>
        <begin position="359"/>
        <end position="363"/>
    </location>
</feature>
<feature type="strand" evidence="2">
    <location>
        <begin position="369"/>
        <end position="373"/>
    </location>
</feature>
<feature type="strand" evidence="2">
    <location>
        <begin position="376"/>
        <end position="378"/>
    </location>
</feature>
<feature type="helix" evidence="2">
    <location>
        <begin position="380"/>
        <end position="392"/>
    </location>
</feature>
<feature type="helix" evidence="2">
    <location>
        <begin position="404"/>
        <end position="416"/>
    </location>
</feature>
<feature type="helix" evidence="2">
    <location>
        <begin position="427"/>
        <end position="437"/>
    </location>
</feature>
<feature type="turn" evidence="2">
    <location>
        <begin position="438"/>
        <end position="440"/>
    </location>
</feature>
<feature type="helix" evidence="2">
    <location>
        <begin position="442"/>
        <end position="449"/>
    </location>
</feature>
<feature type="helix" evidence="2">
    <location>
        <begin position="450"/>
        <end position="454"/>
    </location>
</feature>
<feature type="strand" evidence="2">
    <location>
        <begin position="458"/>
        <end position="463"/>
    </location>
</feature>
<feature type="helix" evidence="2">
    <location>
        <begin position="467"/>
        <end position="475"/>
    </location>
</feature>
<feature type="strand" evidence="2">
    <location>
        <begin position="479"/>
        <end position="482"/>
    </location>
</feature>
<name>Y309_STRR6</name>
<organism>
    <name type="scientific">Streptococcus pneumoniae (strain ATCC BAA-255 / R6)</name>
    <dbReference type="NCBI Taxonomy" id="171101"/>
    <lineage>
        <taxon>Bacteria</taxon>
        <taxon>Bacillati</taxon>
        <taxon>Bacillota</taxon>
        <taxon>Bacilli</taxon>
        <taxon>Lactobacillales</taxon>
        <taxon>Streptococcaceae</taxon>
        <taxon>Streptococcus</taxon>
    </lineage>
</organism>
<sequence length="494" mass="55065">MKKQAFSSEQYLNLQRDHILERINQFDGKLYLEFGGKMLEDFHAARVLPGYEPDNKIKLLQELKEQVEVVIAINASNIEHSKARGDLGISYDQEVLRLIDKFNELGIFVGSVVITQYAGQPAADAFRNQLEKNGIDSYLHYPIKGYPTDMDHIISPEGMGKNDYIKTSRNLIVVTAPGPGSGKLATCMSNMYHDQINGIKSGYAKFETFPIWNLPLHHPVNLAYEAATADLDDVNMIDPFHLQTYGETTVNYNRDIEIFPVLKRMLERILGKSPYASPTDMGVNMVGFAITDDEAAVEASKQEIIRRYYQTVLDFKAEKVGEAAVKKIELLMNDLGITPADRKVAVVARQKAEETGGPALAFELPNGEIVTGKNSELFGPTAAALINAIKKSADIAKEVKLIEPEVVKPIQGLKIDHLGSRNPRLHSNEILIALAITATENPDAARAMEELGNLKGSEAHSTIILTDEDKNVLRKLGINVTFDPYYQYDRLYRK</sequence>
<gene>
    <name type="ordered locus">spr0309</name>
</gene>
<evidence type="ECO:0000255" key="1">
    <source>
        <dbReference type="HAMAP-Rule" id="MF_01567"/>
    </source>
</evidence>
<evidence type="ECO:0007829" key="2">
    <source>
        <dbReference type="PDB" id="7F00"/>
    </source>
</evidence>
<reference key="1">
    <citation type="journal article" date="2001" name="J. Bacteriol.">
        <title>Genome of the bacterium Streptococcus pneumoniae strain R6.</title>
        <authorList>
            <person name="Hoskins J."/>
            <person name="Alborn W.E. Jr."/>
            <person name="Arnold J."/>
            <person name="Blaszczak L.C."/>
            <person name="Burgett S."/>
            <person name="DeHoff B.S."/>
            <person name="Estrem S.T."/>
            <person name="Fritz L."/>
            <person name="Fu D.-J."/>
            <person name="Fuller W."/>
            <person name="Geringer C."/>
            <person name="Gilmour R."/>
            <person name="Glass J.S."/>
            <person name="Khoja H."/>
            <person name="Kraft A.R."/>
            <person name="Lagace R.E."/>
            <person name="LeBlanc D.J."/>
            <person name="Lee L.N."/>
            <person name="Lefkowitz E.J."/>
            <person name="Lu J."/>
            <person name="Matsushima P."/>
            <person name="McAhren S.M."/>
            <person name="McHenney M."/>
            <person name="McLeaster K."/>
            <person name="Mundy C.W."/>
            <person name="Nicas T.I."/>
            <person name="Norris F.H."/>
            <person name="O'Gara M."/>
            <person name="Peery R.B."/>
            <person name="Robertson G.T."/>
            <person name="Rockey P."/>
            <person name="Sun P.-M."/>
            <person name="Winkler M.E."/>
            <person name="Yang Y."/>
            <person name="Young-Bellido M."/>
            <person name="Zhao G."/>
            <person name="Zook C.A."/>
            <person name="Baltz R.H."/>
            <person name="Jaskunas S.R."/>
            <person name="Rosteck P.R. Jr."/>
            <person name="Skatrud P.L."/>
            <person name="Glass J.I."/>
        </authorList>
    </citation>
    <scope>NUCLEOTIDE SEQUENCE [LARGE SCALE GENOMIC DNA]</scope>
    <source>
        <strain>ATCC BAA-255 / R6</strain>
    </source>
</reference>
<accession>Q8CZ70</accession>
<keyword id="KW-0002">3D-structure</keyword>
<keyword id="KW-1185">Reference proteome</keyword>
<protein>
    <recommendedName>
        <fullName evidence="1">UPF0371 protein spr0309</fullName>
    </recommendedName>
</protein>
<comment type="similarity">
    <text evidence="1">Belongs to the UPF0371 family.</text>
</comment>
<dbReference type="EMBL" id="AE007317">
    <property type="protein sequence ID" value="AAK99113.1"/>
    <property type="molecule type" value="Genomic_DNA"/>
</dbReference>
<dbReference type="PIR" id="E97910">
    <property type="entry name" value="E97910"/>
</dbReference>
<dbReference type="RefSeq" id="NP_357903.1">
    <property type="nucleotide sequence ID" value="NC_003098.1"/>
</dbReference>
<dbReference type="RefSeq" id="WP_000743599.1">
    <property type="nucleotide sequence ID" value="NC_003098.1"/>
</dbReference>
<dbReference type="PDB" id="7F00">
    <property type="method" value="X-ray"/>
    <property type="resolution" value="2.70 A"/>
    <property type="chains" value="A/B=1-494"/>
</dbReference>
<dbReference type="PDBsum" id="7F00"/>
<dbReference type="SMR" id="Q8CZ70"/>
<dbReference type="STRING" id="171101.spr0309"/>
<dbReference type="KEGG" id="spr:spr0309"/>
<dbReference type="PATRIC" id="fig|171101.6.peg.346"/>
<dbReference type="eggNOG" id="COG4868">
    <property type="taxonomic scope" value="Bacteria"/>
</dbReference>
<dbReference type="HOGENOM" id="CLU_046981_0_0_9"/>
<dbReference type="Proteomes" id="UP000000586">
    <property type="component" value="Chromosome"/>
</dbReference>
<dbReference type="Gene3D" id="1.20.1570.10">
    <property type="entry name" value="dip2346 domain like"/>
    <property type="match status" value="1"/>
</dbReference>
<dbReference type="Gene3D" id="3.10.630.10">
    <property type="entry name" value="dip2346 domain like"/>
    <property type="match status" value="1"/>
</dbReference>
<dbReference type="Gene3D" id="3.40.140.40">
    <property type="entry name" value="Domain of unknown function (DUF1846), C-terminal subdomain"/>
    <property type="match status" value="1"/>
</dbReference>
<dbReference type="HAMAP" id="MF_01567">
    <property type="entry name" value="UPF0371"/>
    <property type="match status" value="1"/>
</dbReference>
<dbReference type="InterPro" id="IPR014999">
    <property type="entry name" value="DUF1846"/>
</dbReference>
<dbReference type="InterPro" id="IPR048441">
    <property type="entry name" value="DUF1846_C"/>
</dbReference>
<dbReference type="InterPro" id="IPR048496">
    <property type="entry name" value="DUF1846_N"/>
</dbReference>
<dbReference type="NCBIfam" id="NF010184">
    <property type="entry name" value="PRK13663.1"/>
    <property type="match status" value="1"/>
</dbReference>
<dbReference type="Pfam" id="PF08903">
    <property type="entry name" value="DUF1846"/>
    <property type="match status" value="1"/>
</dbReference>
<dbReference type="Pfam" id="PF20921">
    <property type="entry name" value="DUF1846_C"/>
    <property type="match status" value="1"/>
</dbReference>
<dbReference type="PIRSF" id="PIRSF033132">
    <property type="entry name" value="DUF1846"/>
    <property type="match status" value="1"/>
</dbReference>